<accession>P37678</accession>
<accession>Q2M7P4</accession>
<evidence type="ECO:0000250" key="1"/>
<evidence type="ECO:0000269" key="2">
    <source>
    </source>
</evidence>
<evidence type="ECO:0000305" key="3"/>
<proteinExistence type="evidence at protein level"/>
<protein>
    <recommendedName>
        <fullName>3-keto-L-gulonate-6-phosphate decarboxylase SgbH</fullName>
        <shortName>KGPDC</shortName>
        <ecNumber evidence="2">4.1.1.85</ecNumber>
    </recommendedName>
    <alternativeName>
        <fullName>3-dehydro-L-gulonate-6-phosphate decarboxylase</fullName>
    </alternativeName>
</protein>
<organism>
    <name type="scientific">Escherichia coli (strain K12)</name>
    <dbReference type="NCBI Taxonomy" id="83333"/>
    <lineage>
        <taxon>Bacteria</taxon>
        <taxon>Pseudomonadati</taxon>
        <taxon>Pseudomonadota</taxon>
        <taxon>Gammaproteobacteria</taxon>
        <taxon>Enterobacterales</taxon>
        <taxon>Enterobacteriaceae</taxon>
        <taxon>Escherichia</taxon>
    </lineage>
</organism>
<gene>
    <name type="primary">sgbH</name>
    <name type="synonym">yiaQ</name>
    <name type="ordered locus">b3581</name>
    <name type="ordered locus">JW3553</name>
</gene>
<dbReference type="EC" id="4.1.1.85" evidence="2"/>
<dbReference type="EMBL" id="U00039">
    <property type="protein sequence ID" value="AAB18558.1"/>
    <property type="molecule type" value="Genomic_DNA"/>
</dbReference>
<dbReference type="EMBL" id="U00096">
    <property type="protein sequence ID" value="AAC76605.1"/>
    <property type="molecule type" value="Genomic_DNA"/>
</dbReference>
<dbReference type="EMBL" id="AP009048">
    <property type="protein sequence ID" value="BAE77712.1"/>
    <property type="molecule type" value="Genomic_DNA"/>
</dbReference>
<dbReference type="PIR" id="S47802">
    <property type="entry name" value="S47802"/>
</dbReference>
<dbReference type="RefSeq" id="NP_418038.1">
    <property type="nucleotide sequence ID" value="NC_000913.3"/>
</dbReference>
<dbReference type="SMR" id="P37678"/>
<dbReference type="BioGRID" id="4259346">
    <property type="interactions" value="192"/>
</dbReference>
<dbReference type="DIP" id="DIP-10873N"/>
<dbReference type="FunCoup" id="P37678">
    <property type="interactions" value="142"/>
</dbReference>
<dbReference type="IntAct" id="P37678">
    <property type="interactions" value="3"/>
</dbReference>
<dbReference type="STRING" id="511145.b3581"/>
<dbReference type="jPOST" id="P37678"/>
<dbReference type="PaxDb" id="511145-b3581"/>
<dbReference type="EnsemblBacteria" id="AAC76605">
    <property type="protein sequence ID" value="AAC76605"/>
    <property type="gene ID" value="b3581"/>
</dbReference>
<dbReference type="GeneID" id="948098"/>
<dbReference type="KEGG" id="ecj:JW3553"/>
<dbReference type="KEGG" id="eco:b3581"/>
<dbReference type="KEGG" id="ecoc:C3026_19415"/>
<dbReference type="PATRIC" id="fig|511145.12.peg.3696"/>
<dbReference type="EchoBASE" id="EB2193"/>
<dbReference type="eggNOG" id="COG0269">
    <property type="taxonomic scope" value="Bacteria"/>
</dbReference>
<dbReference type="HOGENOM" id="CLU_081825_0_0_6"/>
<dbReference type="InParanoid" id="P37678"/>
<dbReference type="OMA" id="WMTVICA"/>
<dbReference type="OrthoDB" id="43475at2"/>
<dbReference type="PhylomeDB" id="P37678"/>
<dbReference type="BioCyc" id="EcoCyc:EG12285-MONOMER"/>
<dbReference type="BioCyc" id="MetaCyc:EG12285-MONOMER"/>
<dbReference type="PRO" id="PR:P37678"/>
<dbReference type="Proteomes" id="UP000000625">
    <property type="component" value="Chromosome"/>
</dbReference>
<dbReference type="GO" id="GO:0033982">
    <property type="term" value="F:3-dehydro-L-gulonate-6-phosphate decarboxylase activity"/>
    <property type="evidence" value="ECO:0000314"/>
    <property type="project" value="EcoCyc"/>
</dbReference>
<dbReference type="GO" id="GO:0046872">
    <property type="term" value="F:metal ion binding"/>
    <property type="evidence" value="ECO:0007669"/>
    <property type="project" value="UniProtKB-KW"/>
</dbReference>
<dbReference type="GO" id="GO:0004590">
    <property type="term" value="F:orotidine-5'-phosphate decarboxylase activity"/>
    <property type="evidence" value="ECO:0007669"/>
    <property type="project" value="InterPro"/>
</dbReference>
<dbReference type="GO" id="GO:0006207">
    <property type="term" value="P:'de novo' pyrimidine nucleobase biosynthetic process"/>
    <property type="evidence" value="ECO:0007669"/>
    <property type="project" value="InterPro"/>
</dbReference>
<dbReference type="GO" id="GO:0016052">
    <property type="term" value="P:carbohydrate catabolic process"/>
    <property type="evidence" value="ECO:0000270"/>
    <property type="project" value="EcoCyc"/>
</dbReference>
<dbReference type="GO" id="GO:0019854">
    <property type="term" value="P:L-ascorbic acid catabolic process"/>
    <property type="evidence" value="ECO:0000318"/>
    <property type="project" value="GO_Central"/>
</dbReference>
<dbReference type="CDD" id="cd04726">
    <property type="entry name" value="KGPDC_HPS"/>
    <property type="match status" value="1"/>
</dbReference>
<dbReference type="FunFam" id="3.20.20.70:FF:000022">
    <property type="entry name" value="3-keto-L-gulonate-6-phosphate decarboxylase UlaD"/>
    <property type="match status" value="1"/>
</dbReference>
<dbReference type="Gene3D" id="3.20.20.70">
    <property type="entry name" value="Aldolase class I"/>
    <property type="match status" value="1"/>
</dbReference>
<dbReference type="InterPro" id="IPR013785">
    <property type="entry name" value="Aldolase_TIM"/>
</dbReference>
<dbReference type="InterPro" id="IPR041710">
    <property type="entry name" value="HPS/KGPDC"/>
</dbReference>
<dbReference type="InterPro" id="IPR001754">
    <property type="entry name" value="OMPdeCOase_dom"/>
</dbReference>
<dbReference type="InterPro" id="IPR011060">
    <property type="entry name" value="RibuloseP-bd_barrel"/>
</dbReference>
<dbReference type="NCBIfam" id="NF009831">
    <property type="entry name" value="PRK13305.1"/>
    <property type="match status" value="1"/>
</dbReference>
<dbReference type="NCBIfam" id="NF009832">
    <property type="entry name" value="PRK13306.1"/>
    <property type="match status" value="1"/>
</dbReference>
<dbReference type="PANTHER" id="PTHR35039">
    <property type="entry name" value="3-KETO-L-GULONATE-6-PHOSPHATE DECARBOXYLASE SGBH-RELATED"/>
    <property type="match status" value="1"/>
</dbReference>
<dbReference type="PANTHER" id="PTHR35039:SF3">
    <property type="entry name" value="3-KETO-L-GULONATE-6-PHOSPHATE DECARBOXYLASE SGBH-RELATED"/>
    <property type="match status" value="1"/>
</dbReference>
<dbReference type="Pfam" id="PF00215">
    <property type="entry name" value="OMPdecase"/>
    <property type="match status" value="1"/>
</dbReference>
<dbReference type="SMART" id="SM00934">
    <property type="entry name" value="OMPdecase"/>
    <property type="match status" value="1"/>
</dbReference>
<dbReference type="SUPFAM" id="SSF51366">
    <property type="entry name" value="Ribulose-phoshate binding barrel"/>
    <property type="match status" value="1"/>
</dbReference>
<sequence length="220" mass="23445">MSRPLLQLALDHSSLEAAQRDVTLLKDSVDIVEAGTILCLNEGLGAVKALREQCPDKIIVADWKVADAGETLAQQAFGAGANWMTIICAAPLATVEKGHAMAQRCGGEIQIELFGNWTLDDARDWHRIGVRQAIYHRGRDAQASGQQWGEADLARMKALSDIGLELSITGGITPADLPLFKDIRVKAFIAGRALAGAANPAQVAGDFHAQIDAIWGGARA</sequence>
<name>SGBH_ECOLI</name>
<reference key="1">
    <citation type="journal article" date="1994" name="Nucleic Acids Res.">
        <title>Analysis of the Escherichia coli genome. V. DNA sequence of the region from 76.0 to 81.5 minutes.</title>
        <authorList>
            <person name="Sofia H.J."/>
            <person name="Burland V."/>
            <person name="Daniels D.L."/>
            <person name="Plunkett G. III"/>
            <person name="Blattner F.R."/>
        </authorList>
    </citation>
    <scope>NUCLEOTIDE SEQUENCE [LARGE SCALE GENOMIC DNA]</scope>
    <source>
        <strain>K12 / MG1655 / ATCC 47076</strain>
    </source>
</reference>
<reference key="2">
    <citation type="journal article" date="1997" name="Science">
        <title>The complete genome sequence of Escherichia coli K-12.</title>
        <authorList>
            <person name="Blattner F.R."/>
            <person name="Plunkett G. III"/>
            <person name="Bloch C.A."/>
            <person name="Perna N.T."/>
            <person name="Burland V."/>
            <person name="Riley M."/>
            <person name="Collado-Vides J."/>
            <person name="Glasner J.D."/>
            <person name="Rode C.K."/>
            <person name="Mayhew G.F."/>
            <person name="Gregor J."/>
            <person name="Davis N.W."/>
            <person name="Kirkpatrick H.A."/>
            <person name="Goeden M.A."/>
            <person name="Rose D.J."/>
            <person name="Mau B."/>
            <person name="Shao Y."/>
        </authorList>
    </citation>
    <scope>NUCLEOTIDE SEQUENCE [LARGE SCALE GENOMIC DNA]</scope>
    <source>
        <strain>K12 / MG1655 / ATCC 47076</strain>
    </source>
</reference>
<reference key="3">
    <citation type="journal article" date="2006" name="Mol. Syst. Biol.">
        <title>Highly accurate genome sequences of Escherichia coli K-12 strains MG1655 and W3110.</title>
        <authorList>
            <person name="Hayashi K."/>
            <person name="Morooka N."/>
            <person name="Yamamoto Y."/>
            <person name="Fujita K."/>
            <person name="Isono K."/>
            <person name="Choi S."/>
            <person name="Ohtsubo E."/>
            <person name="Baba T."/>
            <person name="Wanner B.L."/>
            <person name="Mori H."/>
            <person name="Horiuchi T."/>
        </authorList>
    </citation>
    <scope>NUCLEOTIDE SEQUENCE [LARGE SCALE GENOMIC DNA]</scope>
    <source>
        <strain>K12 / W3110 / ATCC 27325 / DSM 5911</strain>
    </source>
</reference>
<reference key="4">
    <citation type="journal article" date="1996" name="Genome Sci. Technol.">
        <title>Novel phosphotransferases system genes revealed by bacterial genome analysis: operons encoding homologues of sugar-specific permease domains of the phosphotransferase system and pentose catabolic enzymes.</title>
        <authorList>
            <person name="Reizer J."/>
            <person name="Charbit A."/>
            <person name="Reizer A."/>
            <person name="Saier M.H. Jr."/>
        </authorList>
    </citation>
    <scope>DISCUSSION OF SEQUENCE</scope>
</reference>
<reference key="5">
    <citation type="journal article" date="1997" name="Microbiology">
        <title>Is the ribulose monophosphate pathway widely distributed in bacteria?</title>
        <authorList>
            <person name="Reizer J."/>
            <person name="Reizer A."/>
            <person name="Saier M.H. Jr."/>
        </authorList>
    </citation>
    <scope>DISCUSSION OF SEQUENCE</scope>
</reference>
<reference key="6">
    <citation type="journal article" date="2002" name="J. Bacteriol.">
        <title>Utilization of L-ascorbate by Escherichia coli K-12: assignments of functions to products of the yjf-sga and yia-sgb operons.</title>
        <authorList>
            <person name="Yew W.S."/>
            <person name="Gerlt J.A."/>
        </authorList>
    </citation>
    <scope>FUNCTION</scope>
    <scope>CATALYTIC ACTIVITY</scope>
    <source>
        <strain>K12 / MG1655 / ATCC 47076</strain>
    </source>
</reference>
<keyword id="KW-0119">Carbohydrate metabolism</keyword>
<keyword id="KW-0210">Decarboxylase</keyword>
<keyword id="KW-0456">Lyase</keyword>
<keyword id="KW-0460">Magnesium</keyword>
<keyword id="KW-0479">Metal-binding</keyword>
<keyword id="KW-1185">Reference proteome</keyword>
<comment type="function">
    <text evidence="2">Catalyzes the decarboxylation of 3-keto-L-gulonate-6-P into L-xylulose-5-P. May be involved in the utilization of 2,3-diketo-L-gulonate.</text>
</comment>
<comment type="catalytic activity">
    <reaction evidence="2">
        <text>3-dehydro-L-gulonate 6-phosphate + H(+) = L-xylulose 5-phosphate + CO2</text>
        <dbReference type="Rhea" id="RHEA:14353"/>
        <dbReference type="ChEBI" id="CHEBI:15378"/>
        <dbReference type="ChEBI" id="CHEBI:16526"/>
        <dbReference type="ChEBI" id="CHEBI:57829"/>
        <dbReference type="ChEBI" id="CHEBI:58774"/>
        <dbReference type="EC" id="4.1.1.85"/>
    </reaction>
    <physiologicalReaction direction="left-to-right" evidence="2">
        <dbReference type="Rhea" id="RHEA:14354"/>
    </physiologicalReaction>
</comment>
<comment type="cofactor">
    <cofactor evidence="1">
        <name>Mg(2+)</name>
        <dbReference type="ChEBI" id="CHEBI:18420"/>
    </cofactor>
    <text evidence="1">Binds 1 Mg(2+) ion per subunit.</text>
</comment>
<comment type="subunit">
    <text evidence="1">Homodimer.</text>
</comment>
<comment type="interaction">
    <interactant intactId="EBI-555448">
        <id>P37678</id>
    </interactant>
    <interactant intactId="EBI-562814">
        <id>Q93K97</id>
        <label>nudF</label>
    </interactant>
    <organismsDiffer>false</organismsDiffer>
    <experiments>2</experiments>
</comment>
<comment type="similarity">
    <text evidence="3">Belongs to the HPS/KGPDC family. KGPDC subfamily.</text>
</comment>
<feature type="chain" id="PRO_0000212105" description="3-keto-L-gulonate-6-phosphate decarboxylase SgbH">
    <location>
        <begin position="1"/>
        <end position="220"/>
    </location>
</feature>
<feature type="binding site" evidence="1">
    <location>
        <position position="11"/>
    </location>
    <ligand>
        <name>substrate</name>
    </ligand>
</feature>
<feature type="binding site" evidence="1">
    <location>
        <position position="33"/>
    </location>
    <ligand>
        <name>Mg(2+)</name>
        <dbReference type="ChEBI" id="CHEBI:18420"/>
    </ligand>
</feature>
<feature type="binding site" evidence="1">
    <location>
        <position position="62"/>
    </location>
    <ligand>
        <name>Mg(2+)</name>
        <dbReference type="ChEBI" id="CHEBI:18420"/>
    </ligand>
</feature>
<feature type="binding site" evidence="1">
    <location>
        <position position="192"/>
    </location>
    <ligand>
        <name>substrate</name>
    </ligand>
</feature>
<feature type="site" description="Transition state stabilizer" evidence="1">
    <location>
        <position position="64"/>
    </location>
</feature>
<feature type="site" description="Transition state stabilizer" evidence="1">
    <location>
        <position position="67"/>
    </location>
</feature>